<dbReference type="EMBL" id="AK036637">
    <property type="protein sequence ID" value="BAC29514.1"/>
    <property type="molecule type" value="mRNA"/>
</dbReference>
<dbReference type="EMBL" id="AK044408">
    <property type="protein sequence ID" value="BAC31906.1"/>
    <property type="molecule type" value="mRNA"/>
</dbReference>
<dbReference type="EMBL" id="AK047026">
    <property type="protein sequence ID" value="BAC32943.1"/>
    <property type="status" value="ALT_INIT"/>
    <property type="molecule type" value="mRNA"/>
</dbReference>
<dbReference type="EMBL" id="AK047738">
    <property type="protein sequence ID" value="BAC33143.1"/>
    <property type="molecule type" value="mRNA"/>
</dbReference>
<dbReference type="EMBL" id="AK050673">
    <property type="protein sequence ID" value="BAC34373.1"/>
    <property type="status" value="ALT_INIT"/>
    <property type="molecule type" value="mRNA"/>
</dbReference>
<dbReference type="EMBL" id="AK054548">
    <property type="protein sequence ID" value="BAC35820.1"/>
    <property type="molecule type" value="mRNA"/>
</dbReference>
<dbReference type="EMBL" id="AK088353">
    <property type="protein sequence ID" value="BAC40298.1"/>
    <property type="molecule type" value="mRNA"/>
</dbReference>
<dbReference type="EMBL" id="AK089011">
    <property type="protein sequence ID" value="BAC40699.1"/>
    <property type="molecule type" value="mRNA"/>
</dbReference>
<dbReference type="EMBL" id="AK140246">
    <property type="protein sequence ID" value="BAE24296.1"/>
    <property type="molecule type" value="mRNA"/>
</dbReference>
<dbReference type="EMBL" id="BC042528">
    <property type="protein sequence ID" value="AAH42528.1"/>
    <property type="molecule type" value="mRNA"/>
</dbReference>
<dbReference type="CCDS" id="CCDS19345.1">
    <molecule id="Q8BTY8-3"/>
</dbReference>
<dbReference type="CCDS" id="CCDS51519.1">
    <molecule id="Q8BTY8-1"/>
</dbReference>
<dbReference type="CCDS" id="CCDS71603.1">
    <molecule id="Q8BTY8-2"/>
</dbReference>
<dbReference type="RefSeq" id="NP_001108132.1">
    <molecule id="Q8BTY8-1"/>
    <property type="nucleotide sequence ID" value="NM_001114660.2"/>
</dbReference>
<dbReference type="RefSeq" id="NP_001273366.1">
    <molecule id="Q8BTY8-2"/>
    <property type="nucleotide sequence ID" value="NM_001286437.1"/>
</dbReference>
<dbReference type="RefSeq" id="NP_848787.2">
    <molecule id="Q8BTY8-3"/>
    <property type="nucleotide sequence ID" value="NM_178672.7"/>
</dbReference>
<dbReference type="FunCoup" id="Q8BTY8">
    <property type="interactions" value="2484"/>
</dbReference>
<dbReference type="STRING" id="10090.ENSMUSP00000072636"/>
<dbReference type="GlyGen" id="Q8BTY8">
    <property type="glycosylation" value="1 site"/>
</dbReference>
<dbReference type="iPTMnet" id="Q8BTY8"/>
<dbReference type="PhosphoSitePlus" id="Q8BTY8"/>
<dbReference type="SwissPalm" id="Q8BTY8"/>
<dbReference type="PaxDb" id="10090-ENSMUSP00000072636"/>
<dbReference type="PeptideAtlas" id="Q8BTY8"/>
<dbReference type="ProteomicsDB" id="256744">
    <molecule id="Q8BTY8-1"/>
</dbReference>
<dbReference type="ProteomicsDB" id="256745">
    <molecule id="Q8BTY8-2"/>
</dbReference>
<dbReference type="ProteomicsDB" id="256746">
    <molecule id="Q8BTY8-3"/>
</dbReference>
<dbReference type="ProteomicsDB" id="256747">
    <molecule id="Q8BTY8-4"/>
</dbReference>
<dbReference type="Pumba" id="Q8BTY8"/>
<dbReference type="Antibodypedia" id="23902">
    <property type="antibodies" value="74 antibodies from 20 providers"/>
</dbReference>
<dbReference type="DNASU" id="212986"/>
<dbReference type="Ensembl" id="ENSMUST00000072857.13">
    <molecule id="Q8BTY8-1"/>
    <property type="protein sequence ID" value="ENSMUSP00000072636.7"/>
    <property type="gene ID" value="ENSMUSG00000062110.15"/>
</dbReference>
<dbReference type="Ensembl" id="ENSMUST00000075848.13">
    <molecule id="Q8BTY8-3"/>
    <property type="protein sequence ID" value="ENSMUSP00000075245.7"/>
    <property type="gene ID" value="ENSMUSG00000062110.15"/>
</dbReference>
<dbReference type="Ensembl" id="ENSMUST00000113542.9">
    <molecule id="Q8BTY8-2"/>
    <property type="protein sequence ID" value="ENSMUSP00000109170.3"/>
    <property type="gene ID" value="ENSMUSG00000062110.15"/>
</dbReference>
<dbReference type="Ensembl" id="ENSMUST00000151474.3">
    <molecule id="Q8BTY8-3"/>
    <property type="protein sequence ID" value="ENSMUSP00000121098.2"/>
    <property type="gene ID" value="ENSMUSG00000062110.15"/>
</dbReference>
<dbReference type="GeneID" id="212986"/>
<dbReference type="KEGG" id="mmu:212986"/>
<dbReference type="UCSC" id="uc008xtk.3">
    <molecule id="Q8BTY8-1"/>
    <property type="organism name" value="mouse"/>
</dbReference>
<dbReference type="UCSC" id="uc012dxh.2">
    <molecule id="Q8BTY8-2"/>
    <property type="organism name" value="mouse"/>
</dbReference>
<dbReference type="AGR" id="MGI:2443446"/>
<dbReference type="CTD" id="152579"/>
<dbReference type="MGI" id="MGI:2443446">
    <property type="gene designation" value="Scfd2"/>
</dbReference>
<dbReference type="VEuPathDB" id="HostDB:ENSMUSG00000062110"/>
<dbReference type="eggNOG" id="ENOG502QQIB">
    <property type="taxonomic scope" value="Eukaryota"/>
</dbReference>
<dbReference type="GeneTree" id="ENSGT00390000011192"/>
<dbReference type="HOGENOM" id="CLU_027230_1_0_1"/>
<dbReference type="InParanoid" id="Q8BTY8"/>
<dbReference type="OMA" id="FHEYESL"/>
<dbReference type="OrthoDB" id="549905at2759"/>
<dbReference type="PhylomeDB" id="Q8BTY8"/>
<dbReference type="TreeFam" id="TF329842"/>
<dbReference type="BioGRID-ORCS" id="212986">
    <property type="hits" value="3 hits in 77 CRISPR screens"/>
</dbReference>
<dbReference type="ChiTaRS" id="Scfd2">
    <property type="organism name" value="mouse"/>
</dbReference>
<dbReference type="PRO" id="PR:Q8BTY8"/>
<dbReference type="Proteomes" id="UP000000589">
    <property type="component" value="Chromosome 5"/>
</dbReference>
<dbReference type="RNAct" id="Q8BTY8">
    <property type="molecule type" value="protein"/>
</dbReference>
<dbReference type="Bgee" id="ENSMUSG00000062110">
    <property type="expression patterns" value="Expressed in animal zygote and 149 other cell types or tissues"/>
</dbReference>
<dbReference type="ExpressionAtlas" id="Q8BTY8">
    <property type="expression patterns" value="baseline and differential"/>
</dbReference>
<dbReference type="GO" id="GO:0015031">
    <property type="term" value="P:protein transport"/>
    <property type="evidence" value="ECO:0007669"/>
    <property type="project" value="UniProtKB-KW"/>
</dbReference>
<dbReference type="GO" id="GO:0016192">
    <property type="term" value="P:vesicle-mediated transport"/>
    <property type="evidence" value="ECO:0007669"/>
    <property type="project" value="InterPro"/>
</dbReference>
<dbReference type="Gene3D" id="3.40.50.1910">
    <property type="match status" value="1"/>
</dbReference>
<dbReference type="InterPro" id="IPR001619">
    <property type="entry name" value="Sec1-like"/>
</dbReference>
<dbReference type="InterPro" id="IPR027482">
    <property type="entry name" value="Sec1-like_dom2"/>
</dbReference>
<dbReference type="InterPro" id="IPR036045">
    <property type="entry name" value="Sec1-like_sf"/>
</dbReference>
<dbReference type="PANTHER" id="PTHR11679">
    <property type="entry name" value="VESICLE PROTEIN SORTING-ASSOCIATED"/>
    <property type="match status" value="1"/>
</dbReference>
<dbReference type="Pfam" id="PF00995">
    <property type="entry name" value="Sec1"/>
    <property type="match status" value="1"/>
</dbReference>
<dbReference type="SUPFAM" id="SSF56815">
    <property type="entry name" value="Sec1/munc18-like (SM) proteins"/>
    <property type="match status" value="1"/>
</dbReference>
<organism>
    <name type="scientific">Mus musculus</name>
    <name type="common">Mouse</name>
    <dbReference type="NCBI Taxonomy" id="10090"/>
    <lineage>
        <taxon>Eukaryota</taxon>
        <taxon>Metazoa</taxon>
        <taxon>Chordata</taxon>
        <taxon>Craniata</taxon>
        <taxon>Vertebrata</taxon>
        <taxon>Euteleostomi</taxon>
        <taxon>Mammalia</taxon>
        <taxon>Eutheria</taxon>
        <taxon>Euarchontoglires</taxon>
        <taxon>Glires</taxon>
        <taxon>Rodentia</taxon>
        <taxon>Myomorpha</taxon>
        <taxon>Muroidea</taxon>
        <taxon>Muridae</taxon>
        <taxon>Murinae</taxon>
        <taxon>Mus</taxon>
        <taxon>Mus</taxon>
    </lineage>
</organism>
<sequence>MSAAGILAFAQQGWEQVLAKVKWSVVYLDAACAESLHWSCGSSRLLEAVKGPACHLREFEPQAIGGGAKQPRAVFVLSSPLKGRIVDTLQSIICRSHFQHCVVVTAVSHAVHLTANHVPAAAAAELEGQQPVFEQLEEKLCEWMGNENYTAEVLHVPLFLAPVASHLAFTPAFATLFPLLPQDVHALNSARPDKRRLSSLGEVDATALTPELLLYIRCLVSGLSSLCEHLGVREECFAVGPLSRVIATDLANYAPAKNRKKTATGRASVVFVDRTLDLTGAVGHHGDNLVEKIMSVLPQLPGHTHDVMVNMAELTAVQAVEENQNVIAPGCLAPSNEASAKALWEALLNSKHKEAVMEVRRHLVEAASRENLPIKMSMGRVTPGQLMSYIQLFKNNLRALRNHCGLLQLGMATVQTLKHPQTAKWDNFLAFERLLLQSLGDSTMAGVLNQLLPMIKSSSQRTSDDLNPEELLILLIYIYSVPGDVTLDRDLGDVEEKVKKALAHVLSEESELSPLLQKITGCDSAVDLTLPKSQIAVNDVFMALREIAGARNLMRQFKSVYVPGNNTHQASYKPLLKQVVEEIFNPEKSDPIDIEHMSSGLTDLLKTGFSMFMKVSRPHPSDHPLLILFVVGGVTVAEAKMVKDLVASLKPGTQVMVLSTRLLKPLNIPELLFATDRLHPDLGF</sequence>
<protein>
    <recommendedName>
        <fullName>Sec1 family domain-containing protein 2</fullName>
    </recommendedName>
    <alternativeName>
        <fullName>Neuronal Sec1</fullName>
    </alternativeName>
    <alternativeName>
        <fullName>Syntaxin-binding protein 1-like 1</fullName>
    </alternativeName>
</protein>
<comment type="function">
    <text evidence="1">May be involved in protein transport.</text>
</comment>
<comment type="alternative products">
    <event type="alternative splicing"/>
    <isoform>
        <id>Q8BTY8-1</id>
        <name>1</name>
        <sequence type="displayed"/>
    </isoform>
    <isoform>
        <id>Q8BTY8-2</id>
        <name>2</name>
        <sequence type="described" ref="VSP_010714"/>
    </isoform>
    <isoform>
        <id>Q8BTY8-3</id>
        <name>3</name>
        <sequence type="described" ref="VSP_010712 VSP_010713"/>
    </isoform>
    <isoform>
        <id>Q8BTY8-4</id>
        <name>4</name>
        <sequence type="described" ref="VSP_010711 VSP_010712 VSP_010713"/>
    </isoform>
</comment>
<comment type="similarity">
    <text evidence="4">Belongs to the STXBP/unc-18/SEC1 family.</text>
</comment>
<comment type="sequence caution" evidence="4">
    <conflict type="erroneous initiation">
        <sequence resource="EMBL-CDS" id="BAC32943"/>
    </conflict>
</comment>
<comment type="sequence caution" evidence="4">
    <conflict type="erroneous initiation">
        <sequence resource="EMBL-CDS" id="BAC34373"/>
    </conflict>
</comment>
<proteinExistence type="evidence at protein level"/>
<gene>
    <name type="primary">Scfd2</name>
    <name type="synonym">Stxbp1l1</name>
</gene>
<reference key="1">
    <citation type="journal article" date="2005" name="Science">
        <title>The transcriptional landscape of the mammalian genome.</title>
        <authorList>
            <person name="Carninci P."/>
            <person name="Kasukawa T."/>
            <person name="Katayama S."/>
            <person name="Gough J."/>
            <person name="Frith M.C."/>
            <person name="Maeda N."/>
            <person name="Oyama R."/>
            <person name="Ravasi T."/>
            <person name="Lenhard B."/>
            <person name="Wells C."/>
            <person name="Kodzius R."/>
            <person name="Shimokawa K."/>
            <person name="Bajic V.B."/>
            <person name="Brenner S.E."/>
            <person name="Batalov S."/>
            <person name="Forrest A.R."/>
            <person name="Zavolan M."/>
            <person name="Davis M.J."/>
            <person name="Wilming L.G."/>
            <person name="Aidinis V."/>
            <person name="Allen J.E."/>
            <person name="Ambesi-Impiombato A."/>
            <person name="Apweiler R."/>
            <person name="Aturaliya R.N."/>
            <person name="Bailey T.L."/>
            <person name="Bansal M."/>
            <person name="Baxter L."/>
            <person name="Beisel K.W."/>
            <person name="Bersano T."/>
            <person name="Bono H."/>
            <person name="Chalk A.M."/>
            <person name="Chiu K.P."/>
            <person name="Choudhary V."/>
            <person name="Christoffels A."/>
            <person name="Clutterbuck D.R."/>
            <person name="Crowe M.L."/>
            <person name="Dalla E."/>
            <person name="Dalrymple B.P."/>
            <person name="de Bono B."/>
            <person name="Della Gatta G."/>
            <person name="di Bernardo D."/>
            <person name="Down T."/>
            <person name="Engstrom P."/>
            <person name="Fagiolini M."/>
            <person name="Faulkner G."/>
            <person name="Fletcher C.F."/>
            <person name="Fukushima T."/>
            <person name="Furuno M."/>
            <person name="Futaki S."/>
            <person name="Gariboldi M."/>
            <person name="Georgii-Hemming P."/>
            <person name="Gingeras T.R."/>
            <person name="Gojobori T."/>
            <person name="Green R.E."/>
            <person name="Gustincich S."/>
            <person name="Harbers M."/>
            <person name="Hayashi Y."/>
            <person name="Hensch T.K."/>
            <person name="Hirokawa N."/>
            <person name="Hill D."/>
            <person name="Huminiecki L."/>
            <person name="Iacono M."/>
            <person name="Ikeo K."/>
            <person name="Iwama A."/>
            <person name="Ishikawa T."/>
            <person name="Jakt M."/>
            <person name="Kanapin A."/>
            <person name="Katoh M."/>
            <person name="Kawasawa Y."/>
            <person name="Kelso J."/>
            <person name="Kitamura H."/>
            <person name="Kitano H."/>
            <person name="Kollias G."/>
            <person name="Krishnan S.P."/>
            <person name="Kruger A."/>
            <person name="Kummerfeld S.K."/>
            <person name="Kurochkin I.V."/>
            <person name="Lareau L.F."/>
            <person name="Lazarevic D."/>
            <person name="Lipovich L."/>
            <person name="Liu J."/>
            <person name="Liuni S."/>
            <person name="McWilliam S."/>
            <person name="Madan Babu M."/>
            <person name="Madera M."/>
            <person name="Marchionni L."/>
            <person name="Matsuda H."/>
            <person name="Matsuzawa S."/>
            <person name="Miki H."/>
            <person name="Mignone F."/>
            <person name="Miyake S."/>
            <person name="Morris K."/>
            <person name="Mottagui-Tabar S."/>
            <person name="Mulder N."/>
            <person name="Nakano N."/>
            <person name="Nakauchi H."/>
            <person name="Ng P."/>
            <person name="Nilsson R."/>
            <person name="Nishiguchi S."/>
            <person name="Nishikawa S."/>
            <person name="Nori F."/>
            <person name="Ohara O."/>
            <person name="Okazaki Y."/>
            <person name="Orlando V."/>
            <person name="Pang K.C."/>
            <person name="Pavan W.J."/>
            <person name="Pavesi G."/>
            <person name="Pesole G."/>
            <person name="Petrovsky N."/>
            <person name="Piazza S."/>
            <person name="Reed J."/>
            <person name="Reid J.F."/>
            <person name="Ring B.Z."/>
            <person name="Ringwald M."/>
            <person name="Rost B."/>
            <person name="Ruan Y."/>
            <person name="Salzberg S.L."/>
            <person name="Sandelin A."/>
            <person name="Schneider C."/>
            <person name="Schoenbach C."/>
            <person name="Sekiguchi K."/>
            <person name="Semple C.A."/>
            <person name="Seno S."/>
            <person name="Sessa L."/>
            <person name="Sheng Y."/>
            <person name="Shibata Y."/>
            <person name="Shimada H."/>
            <person name="Shimada K."/>
            <person name="Silva D."/>
            <person name="Sinclair B."/>
            <person name="Sperling S."/>
            <person name="Stupka E."/>
            <person name="Sugiura K."/>
            <person name="Sultana R."/>
            <person name="Takenaka Y."/>
            <person name="Taki K."/>
            <person name="Tammoja K."/>
            <person name="Tan S.L."/>
            <person name="Tang S."/>
            <person name="Taylor M.S."/>
            <person name="Tegner J."/>
            <person name="Teichmann S.A."/>
            <person name="Ueda H.R."/>
            <person name="van Nimwegen E."/>
            <person name="Verardo R."/>
            <person name="Wei C.L."/>
            <person name="Yagi K."/>
            <person name="Yamanishi H."/>
            <person name="Zabarovsky E."/>
            <person name="Zhu S."/>
            <person name="Zimmer A."/>
            <person name="Hide W."/>
            <person name="Bult C."/>
            <person name="Grimmond S.M."/>
            <person name="Teasdale R.D."/>
            <person name="Liu E.T."/>
            <person name="Brusic V."/>
            <person name="Quackenbush J."/>
            <person name="Wahlestedt C."/>
            <person name="Mattick J.S."/>
            <person name="Hume D.A."/>
            <person name="Kai C."/>
            <person name="Sasaki D."/>
            <person name="Tomaru Y."/>
            <person name="Fukuda S."/>
            <person name="Kanamori-Katayama M."/>
            <person name="Suzuki M."/>
            <person name="Aoki J."/>
            <person name="Arakawa T."/>
            <person name="Iida J."/>
            <person name="Imamura K."/>
            <person name="Itoh M."/>
            <person name="Kato T."/>
            <person name="Kawaji H."/>
            <person name="Kawagashira N."/>
            <person name="Kawashima T."/>
            <person name="Kojima M."/>
            <person name="Kondo S."/>
            <person name="Konno H."/>
            <person name="Nakano K."/>
            <person name="Ninomiya N."/>
            <person name="Nishio T."/>
            <person name="Okada M."/>
            <person name="Plessy C."/>
            <person name="Shibata K."/>
            <person name="Shiraki T."/>
            <person name="Suzuki S."/>
            <person name="Tagami M."/>
            <person name="Waki K."/>
            <person name="Watahiki A."/>
            <person name="Okamura-Oho Y."/>
            <person name="Suzuki H."/>
            <person name="Kawai J."/>
            <person name="Hayashizaki Y."/>
        </authorList>
    </citation>
    <scope>NUCLEOTIDE SEQUENCE [LARGE SCALE MRNA] (ISOFORMS 1; 2; 3 AND 4)</scope>
    <source>
        <strain>C57BL/6J</strain>
        <strain>NOD</strain>
        <tissue>Bone</tissue>
        <tissue>Cerebellum</tissue>
        <tissue>Corpora quadrigemina</tissue>
        <tissue>Corpus striatum</tissue>
        <tissue>Embryo</tissue>
        <tissue>Ovary</tissue>
        <tissue>Retina</tissue>
        <tissue>Thymus</tissue>
    </source>
</reference>
<reference key="2">
    <citation type="journal article" date="2004" name="Genome Res.">
        <title>The status, quality, and expansion of the NIH full-length cDNA project: the Mammalian Gene Collection (MGC).</title>
        <authorList>
            <consortium name="The MGC Project Team"/>
        </authorList>
    </citation>
    <scope>NUCLEOTIDE SEQUENCE [LARGE SCALE MRNA] (ISOFORM 3)</scope>
    <source>
        <strain>NMRI</strain>
        <tissue>Mammary gland</tissue>
    </source>
</reference>
<reference key="3">
    <citation type="journal article" date="2010" name="Cell">
        <title>A tissue-specific atlas of mouse protein phosphorylation and expression.</title>
        <authorList>
            <person name="Huttlin E.L."/>
            <person name="Jedrychowski M.P."/>
            <person name="Elias J.E."/>
            <person name="Goswami T."/>
            <person name="Rad R."/>
            <person name="Beausoleil S.A."/>
            <person name="Villen J."/>
            <person name="Haas W."/>
            <person name="Sowa M.E."/>
            <person name="Gygi S.P."/>
        </authorList>
    </citation>
    <scope>IDENTIFICATION BY MASS SPECTROMETRY [LARGE SCALE ANALYSIS]</scope>
    <source>
        <tissue>Heart</tissue>
        <tissue>Kidney</tissue>
        <tissue>Liver</tissue>
        <tissue>Lung</tissue>
        <tissue>Pancreas</tissue>
        <tissue>Spleen</tissue>
        <tissue>Testis</tissue>
    </source>
</reference>
<accession>Q8BTY8</accession>
<accession>Q3USN5</accession>
<accession>Q8BFV9</accession>
<accession>Q8BKU5</accession>
<accession>Q8BKZ0</accession>
<accession>Q8BTP6</accession>
<accession>Q8BTQ9</accession>
<accession>Q8BXI1</accession>
<accession>Q8BXS0</accession>
<accession>Q8BZ58</accession>
<evidence type="ECO:0000250" key="1"/>
<evidence type="ECO:0000303" key="2">
    <source>
    </source>
</evidence>
<evidence type="ECO:0000303" key="3">
    <source>
    </source>
</evidence>
<evidence type="ECO:0000305" key="4"/>
<name>SCFD2_MOUSE</name>
<keyword id="KW-0025">Alternative splicing</keyword>
<keyword id="KW-0653">Protein transport</keyword>
<keyword id="KW-1185">Reference proteome</keyword>
<keyword id="KW-0813">Transport</keyword>
<feature type="chain" id="PRO_0000206291" description="Sec1 family domain-containing protein 2">
    <location>
        <begin position="1"/>
        <end position="684"/>
    </location>
</feature>
<feature type="splice variant" id="VSP_010711" description="In isoform 4." evidence="3">
    <location>
        <begin position="1"/>
        <end position="143"/>
    </location>
</feature>
<feature type="splice variant" id="VSP_010712" description="In isoform 3 and isoform 4." evidence="2 3">
    <original>SLGDSTMAGVLNQLLPMIKSSSQRTSDDLNPEELLILLIY</original>
    <variation>CSFVLRACGHLLHSCHGTMLPPVPRQPPWVHPPHGCPFIP</variation>
    <location>
        <begin position="438"/>
        <end position="477"/>
    </location>
</feature>
<feature type="splice variant" id="VSP_010713" description="In isoform 3 and isoform 4." evidence="2 3">
    <location>
        <begin position="478"/>
        <end position="684"/>
    </location>
</feature>
<feature type="splice variant" id="VSP_010714" description="In isoform 2." evidence="3">
    <location>
        <begin position="615"/>
        <end position="654"/>
    </location>
</feature>
<feature type="sequence conflict" description="In Ref. 1; BAC29514." evidence="4" ref="1">
    <original>L</original>
    <variation>V</variation>
    <location>
        <position position="89"/>
    </location>
</feature>
<feature type="sequence conflict" description="In Ref. 1; BAC31906/BAC34373." evidence="4" ref="1">
    <original>E</original>
    <variation>G</variation>
    <location>
        <position position="234"/>
    </location>
</feature>
<feature type="sequence conflict" description="In Ref. 1; BAC29514." evidence="4" ref="1">
    <original>S</original>
    <variation>R</variation>
    <location>
        <position position="368"/>
    </location>
</feature>